<sequence length="310" mass="34613">MERGMTDIETAETPATHSGFVALIGAPNAGKSTLVNQLVGAKVSIVTHKVQTTRAIVRGIATHDNAQIVFVDTPGIFKPKRRLDTAMVTTAWGGAKDADIVLLLIDAERGIRGDADAILERLKDVRQPMALILNKVDRVKHETLLALSAAANEKVPFKRTFMVSALTGSGCKDLLDYLAQALPAGPWYYPEDQISDLPMRQLAAEITREKLYLRLHQELPYSSHIETEKWEEKPDGSVRIDQTIYVERDSQKKIVLGHKGETIRAIGQAARMEIAGILEQKVHLFLFVKVRENWGDDPERYREMGLEFPH</sequence>
<evidence type="ECO:0000255" key="1">
    <source>
        <dbReference type="HAMAP-Rule" id="MF_00367"/>
    </source>
</evidence>
<evidence type="ECO:0000255" key="2">
    <source>
        <dbReference type="PROSITE-ProRule" id="PRU01050"/>
    </source>
</evidence>
<name>ERA_RHILO</name>
<proteinExistence type="inferred from homology"/>
<keyword id="KW-0997">Cell inner membrane</keyword>
<keyword id="KW-1003">Cell membrane</keyword>
<keyword id="KW-0963">Cytoplasm</keyword>
<keyword id="KW-0342">GTP-binding</keyword>
<keyword id="KW-0472">Membrane</keyword>
<keyword id="KW-0547">Nucleotide-binding</keyword>
<keyword id="KW-0690">Ribosome biogenesis</keyword>
<keyword id="KW-0694">RNA-binding</keyword>
<keyword id="KW-0699">rRNA-binding</keyword>
<comment type="function">
    <text evidence="1">An essential GTPase that binds both GDP and GTP, with rapid nucleotide exchange. Plays a role in 16S rRNA processing and 30S ribosomal subunit biogenesis and possibly also in cell cycle regulation and energy metabolism.</text>
</comment>
<comment type="subunit">
    <text evidence="1">Monomer.</text>
</comment>
<comment type="subcellular location">
    <subcellularLocation>
        <location>Cytoplasm</location>
    </subcellularLocation>
    <subcellularLocation>
        <location evidence="1">Cell inner membrane</location>
        <topology evidence="1">Peripheral membrane protein</topology>
    </subcellularLocation>
</comment>
<comment type="similarity">
    <text evidence="1 2">Belongs to the TRAFAC class TrmE-Era-EngA-EngB-Septin-like GTPase superfamily. Era GTPase family.</text>
</comment>
<accession>Q985A5</accession>
<reference key="1">
    <citation type="journal article" date="2000" name="DNA Res.">
        <title>Complete genome structure of the nitrogen-fixing symbiotic bacterium Mesorhizobium loti.</title>
        <authorList>
            <person name="Kaneko T."/>
            <person name="Nakamura Y."/>
            <person name="Sato S."/>
            <person name="Asamizu E."/>
            <person name="Kato T."/>
            <person name="Sasamoto S."/>
            <person name="Watanabe A."/>
            <person name="Idesawa K."/>
            <person name="Ishikawa A."/>
            <person name="Kawashima K."/>
            <person name="Kimura T."/>
            <person name="Kishida Y."/>
            <person name="Kiyokawa C."/>
            <person name="Kohara M."/>
            <person name="Matsumoto M."/>
            <person name="Matsuno A."/>
            <person name="Mochizuki Y."/>
            <person name="Nakayama S."/>
            <person name="Nakazaki N."/>
            <person name="Shimpo S."/>
            <person name="Sugimoto M."/>
            <person name="Takeuchi C."/>
            <person name="Yamada M."/>
            <person name="Tabata S."/>
        </authorList>
    </citation>
    <scope>NUCLEOTIDE SEQUENCE [LARGE SCALE GENOMIC DNA]</scope>
    <source>
        <strain>LMG 29417 / CECT 9101 / MAFF 303099</strain>
    </source>
</reference>
<dbReference type="EMBL" id="BA000012">
    <property type="protein sequence ID" value="BAB54158.1"/>
    <property type="molecule type" value="Genomic_DNA"/>
</dbReference>
<dbReference type="SMR" id="Q985A5"/>
<dbReference type="KEGG" id="mlo:mlr7766"/>
<dbReference type="eggNOG" id="COG1159">
    <property type="taxonomic scope" value="Bacteria"/>
</dbReference>
<dbReference type="HOGENOM" id="CLU_038009_1_1_5"/>
<dbReference type="Proteomes" id="UP000000552">
    <property type="component" value="Chromosome"/>
</dbReference>
<dbReference type="GO" id="GO:0005829">
    <property type="term" value="C:cytosol"/>
    <property type="evidence" value="ECO:0007669"/>
    <property type="project" value="TreeGrafter"/>
</dbReference>
<dbReference type="GO" id="GO:0005886">
    <property type="term" value="C:plasma membrane"/>
    <property type="evidence" value="ECO:0007669"/>
    <property type="project" value="UniProtKB-SubCell"/>
</dbReference>
<dbReference type="GO" id="GO:0005525">
    <property type="term" value="F:GTP binding"/>
    <property type="evidence" value="ECO:0007669"/>
    <property type="project" value="UniProtKB-UniRule"/>
</dbReference>
<dbReference type="GO" id="GO:0003924">
    <property type="term" value="F:GTPase activity"/>
    <property type="evidence" value="ECO:0007669"/>
    <property type="project" value="UniProtKB-UniRule"/>
</dbReference>
<dbReference type="GO" id="GO:0043024">
    <property type="term" value="F:ribosomal small subunit binding"/>
    <property type="evidence" value="ECO:0007669"/>
    <property type="project" value="TreeGrafter"/>
</dbReference>
<dbReference type="GO" id="GO:0070181">
    <property type="term" value="F:small ribosomal subunit rRNA binding"/>
    <property type="evidence" value="ECO:0007669"/>
    <property type="project" value="UniProtKB-UniRule"/>
</dbReference>
<dbReference type="GO" id="GO:0000028">
    <property type="term" value="P:ribosomal small subunit assembly"/>
    <property type="evidence" value="ECO:0007669"/>
    <property type="project" value="TreeGrafter"/>
</dbReference>
<dbReference type="CDD" id="cd04163">
    <property type="entry name" value="Era"/>
    <property type="match status" value="1"/>
</dbReference>
<dbReference type="CDD" id="cd22534">
    <property type="entry name" value="KH-II_Era"/>
    <property type="match status" value="1"/>
</dbReference>
<dbReference type="FunFam" id="3.30.300.20:FF:000031">
    <property type="entry name" value="GTPase Era"/>
    <property type="match status" value="1"/>
</dbReference>
<dbReference type="Gene3D" id="3.30.300.20">
    <property type="match status" value="1"/>
</dbReference>
<dbReference type="Gene3D" id="3.40.50.300">
    <property type="entry name" value="P-loop containing nucleotide triphosphate hydrolases"/>
    <property type="match status" value="1"/>
</dbReference>
<dbReference type="HAMAP" id="MF_00367">
    <property type="entry name" value="GTPase_Era"/>
    <property type="match status" value="1"/>
</dbReference>
<dbReference type="InterPro" id="IPR030388">
    <property type="entry name" value="G_ERA_dom"/>
</dbReference>
<dbReference type="InterPro" id="IPR006073">
    <property type="entry name" value="GTP-bd"/>
</dbReference>
<dbReference type="InterPro" id="IPR005662">
    <property type="entry name" value="GTPase_Era-like"/>
</dbReference>
<dbReference type="InterPro" id="IPR015946">
    <property type="entry name" value="KH_dom-like_a/b"/>
</dbReference>
<dbReference type="InterPro" id="IPR004044">
    <property type="entry name" value="KH_dom_type_2"/>
</dbReference>
<dbReference type="InterPro" id="IPR009019">
    <property type="entry name" value="KH_sf_prok-type"/>
</dbReference>
<dbReference type="InterPro" id="IPR027417">
    <property type="entry name" value="P-loop_NTPase"/>
</dbReference>
<dbReference type="InterPro" id="IPR005225">
    <property type="entry name" value="Small_GTP-bd"/>
</dbReference>
<dbReference type="NCBIfam" id="TIGR00436">
    <property type="entry name" value="era"/>
    <property type="match status" value="1"/>
</dbReference>
<dbReference type="NCBIfam" id="NF000908">
    <property type="entry name" value="PRK00089.1"/>
    <property type="match status" value="1"/>
</dbReference>
<dbReference type="NCBIfam" id="TIGR00231">
    <property type="entry name" value="small_GTP"/>
    <property type="match status" value="1"/>
</dbReference>
<dbReference type="PANTHER" id="PTHR42698">
    <property type="entry name" value="GTPASE ERA"/>
    <property type="match status" value="1"/>
</dbReference>
<dbReference type="PANTHER" id="PTHR42698:SF1">
    <property type="entry name" value="GTPASE ERA, MITOCHONDRIAL"/>
    <property type="match status" value="1"/>
</dbReference>
<dbReference type="Pfam" id="PF07650">
    <property type="entry name" value="KH_2"/>
    <property type="match status" value="1"/>
</dbReference>
<dbReference type="Pfam" id="PF01926">
    <property type="entry name" value="MMR_HSR1"/>
    <property type="match status" value="1"/>
</dbReference>
<dbReference type="SUPFAM" id="SSF52540">
    <property type="entry name" value="P-loop containing nucleoside triphosphate hydrolases"/>
    <property type="match status" value="1"/>
</dbReference>
<dbReference type="SUPFAM" id="SSF54814">
    <property type="entry name" value="Prokaryotic type KH domain (KH-domain type II)"/>
    <property type="match status" value="1"/>
</dbReference>
<dbReference type="PROSITE" id="PS51713">
    <property type="entry name" value="G_ERA"/>
    <property type="match status" value="1"/>
</dbReference>
<dbReference type="PROSITE" id="PS50823">
    <property type="entry name" value="KH_TYPE_2"/>
    <property type="match status" value="1"/>
</dbReference>
<feature type="chain" id="PRO_0000180040" description="GTPase Era">
    <location>
        <begin position="1"/>
        <end position="310"/>
    </location>
</feature>
<feature type="domain" description="Era-type G" evidence="2">
    <location>
        <begin position="17"/>
        <end position="184"/>
    </location>
</feature>
<feature type="domain" description="KH type-2" evidence="1">
    <location>
        <begin position="215"/>
        <end position="292"/>
    </location>
</feature>
<feature type="region of interest" description="G1" evidence="2">
    <location>
        <begin position="25"/>
        <end position="32"/>
    </location>
</feature>
<feature type="region of interest" description="G2" evidence="2">
    <location>
        <begin position="51"/>
        <end position="55"/>
    </location>
</feature>
<feature type="region of interest" description="G3" evidence="2">
    <location>
        <begin position="72"/>
        <end position="75"/>
    </location>
</feature>
<feature type="region of interest" description="G4" evidence="2">
    <location>
        <begin position="134"/>
        <end position="137"/>
    </location>
</feature>
<feature type="region of interest" description="G5" evidence="2">
    <location>
        <begin position="163"/>
        <end position="165"/>
    </location>
</feature>
<feature type="binding site" evidence="1">
    <location>
        <begin position="25"/>
        <end position="32"/>
    </location>
    <ligand>
        <name>GTP</name>
        <dbReference type="ChEBI" id="CHEBI:37565"/>
    </ligand>
</feature>
<feature type="binding site" evidence="1">
    <location>
        <begin position="72"/>
        <end position="76"/>
    </location>
    <ligand>
        <name>GTP</name>
        <dbReference type="ChEBI" id="CHEBI:37565"/>
    </ligand>
</feature>
<feature type="binding site" evidence="1">
    <location>
        <begin position="134"/>
        <end position="137"/>
    </location>
    <ligand>
        <name>GTP</name>
        <dbReference type="ChEBI" id="CHEBI:37565"/>
    </ligand>
</feature>
<protein>
    <recommendedName>
        <fullName evidence="1">GTPase Era</fullName>
    </recommendedName>
</protein>
<organism>
    <name type="scientific">Mesorhizobium japonicum (strain LMG 29417 / CECT 9101 / MAFF 303099)</name>
    <name type="common">Mesorhizobium loti (strain MAFF 303099)</name>
    <dbReference type="NCBI Taxonomy" id="266835"/>
    <lineage>
        <taxon>Bacteria</taxon>
        <taxon>Pseudomonadati</taxon>
        <taxon>Pseudomonadota</taxon>
        <taxon>Alphaproteobacteria</taxon>
        <taxon>Hyphomicrobiales</taxon>
        <taxon>Phyllobacteriaceae</taxon>
        <taxon>Mesorhizobium</taxon>
    </lineage>
</organism>
<gene>
    <name evidence="1" type="primary">era</name>
    <name type="ordered locus">mlr7766</name>
</gene>